<name>KCY_MACCJ</name>
<dbReference type="EC" id="2.7.4.25" evidence="1"/>
<dbReference type="EMBL" id="AP009484">
    <property type="protein sequence ID" value="BAH17835.1"/>
    <property type="molecule type" value="Genomic_DNA"/>
</dbReference>
<dbReference type="RefSeq" id="WP_012657033.1">
    <property type="nucleotide sequence ID" value="NC_011999.1"/>
</dbReference>
<dbReference type="SMR" id="B9E6L7"/>
<dbReference type="STRING" id="458233.MCCL_1128"/>
<dbReference type="GeneID" id="61128991"/>
<dbReference type="KEGG" id="mcl:MCCL_1128"/>
<dbReference type="eggNOG" id="COG0283">
    <property type="taxonomic scope" value="Bacteria"/>
</dbReference>
<dbReference type="HOGENOM" id="CLU_079959_0_2_9"/>
<dbReference type="OrthoDB" id="9807434at2"/>
<dbReference type="Proteomes" id="UP000001383">
    <property type="component" value="Chromosome"/>
</dbReference>
<dbReference type="GO" id="GO:0005829">
    <property type="term" value="C:cytosol"/>
    <property type="evidence" value="ECO:0007669"/>
    <property type="project" value="TreeGrafter"/>
</dbReference>
<dbReference type="GO" id="GO:0005524">
    <property type="term" value="F:ATP binding"/>
    <property type="evidence" value="ECO:0007669"/>
    <property type="project" value="UniProtKB-UniRule"/>
</dbReference>
<dbReference type="GO" id="GO:0036430">
    <property type="term" value="F:CMP kinase activity"/>
    <property type="evidence" value="ECO:0007669"/>
    <property type="project" value="RHEA"/>
</dbReference>
<dbReference type="GO" id="GO:0036431">
    <property type="term" value="F:dCMP kinase activity"/>
    <property type="evidence" value="ECO:0007669"/>
    <property type="project" value="RHEA"/>
</dbReference>
<dbReference type="GO" id="GO:0015949">
    <property type="term" value="P:nucleobase-containing small molecule interconversion"/>
    <property type="evidence" value="ECO:0007669"/>
    <property type="project" value="TreeGrafter"/>
</dbReference>
<dbReference type="GO" id="GO:0006220">
    <property type="term" value="P:pyrimidine nucleotide metabolic process"/>
    <property type="evidence" value="ECO:0007669"/>
    <property type="project" value="UniProtKB-UniRule"/>
</dbReference>
<dbReference type="CDD" id="cd02020">
    <property type="entry name" value="CMPK"/>
    <property type="match status" value="1"/>
</dbReference>
<dbReference type="Gene3D" id="3.40.50.300">
    <property type="entry name" value="P-loop containing nucleotide triphosphate hydrolases"/>
    <property type="match status" value="1"/>
</dbReference>
<dbReference type="HAMAP" id="MF_00238">
    <property type="entry name" value="Cytidyl_kinase_type1"/>
    <property type="match status" value="1"/>
</dbReference>
<dbReference type="InterPro" id="IPR003136">
    <property type="entry name" value="Cytidylate_kin"/>
</dbReference>
<dbReference type="InterPro" id="IPR011994">
    <property type="entry name" value="Cytidylate_kinase_dom"/>
</dbReference>
<dbReference type="InterPro" id="IPR027417">
    <property type="entry name" value="P-loop_NTPase"/>
</dbReference>
<dbReference type="NCBIfam" id="TIGR00017">
    <property type="entry name" value="cmk"/>
    <property type="match status" value="1"/>
</dbReference>
<dbReference type="PANTHER" id="PTHR21299:SF2">
    <property type="entry name" value="CYTIDYLATE KINASE"/>
    <property type="match status" value="1"/>
</dbReference>
<dbReference type="PANTHER" id="PTHR21299">
    <property type="entry name" value="CYTIDYLATE KINASE/PANTOATE-BETA-ALANINE LIGASE"/>
    <property type="match status" value="1"/>
</dbReference>
<dbReference type="Pfam" id="PF02224">
    <property type="entry name" value="Cytidylate_kin"/>
    <property type="match status" value="1"/>
</dbReference>
<dbReference type="SUPFAM" id="SSF52540">
    <property type="entry name" value="P-loop containing nucleoside triphosphate hydrolases"/>
    <property type="match status" value="1"/>
</dbReference>
<accession>B9E6L7</accession>
<proteinExistence type="inferred from homology"/>
<evidence type="ECO:0000255" key="1">
    <source>
        <dbReference type="HAMAP-Rule" id="MF_00238"/>
    </source>
</evidence>
<reference key="1">
    <citation type="journal article" date="2009" name="J. Bacteriol.">
        <title>Complete genome sequence of Macrococcus caseolyticus strain JCSCS5402, reflecting the ancestral genome of the human-pathogenic staphylococci.</title>
        <authorList>
            <person name="Baba T."/>
            <person name="Kuwahara-Arai K."/>
            <person name="Uchiyama I."/>
            <person name="Takeuchi F."/>
            <person name="Ito T."/>
            <person name="Hiramatsu K."/>
        </authorList>
    </citation>
    <scope>NUCLEOTIDE SEQUENCE [LARGE SCALE GENOMIC DNA]</scope>
    <source>
        <strain>JCSC5402</strain>
    </source>
</reference>
<keyword id="KW-0067">ATP-binding</keyword>
<keyword id="KW-0963">Cytoplasm</keyword>
<keyword id="KW-0418">Kinase</keyword>
<keyword id="KW-0547">Nucleotide-binding</keyword>
<keyword id="KW-1185">Reference proteome</keyword>
<keyword id="KW-0808">Transferase</keyword>
<comment type="catalytic activity">
    <reaction evidence="1">
        <text>CMP + ATP = CDP + ADP</text>
        <dbReference type="Rhea" id="RHEA:11600"/>
        <dbReference type="ChEBI" id="CHEBI:30616"/>
        <dbReference type="ChEBI" id="CHEBI:58069"/>
        <dbReference type="ChEBI" id="CHEBI:60377"/>
        <dbReference type="ChEBI" id="CHEBI:456216"/>
        <dbReference type="EC" id="2.7.4.25"/>
    </reaction>
</comment>
<comment type="catalytic activity">
    <reaction evidence="1">
        <text>dCMP + ATP = dCDP + ADP</text>
        <dbReference type="Rhea" id="RHEA:25094"/>
        <dbReference type="ChEBI" id="CHEBI:30616"/>
        <dbReference type="ChEBI" id="CHEBI:57566"/>
        <dbReference type="ChEBI" id="CHEBI:58593"/>
        <dbReference type="ChEBI" id="CHEBI:456216"/>
        <dbReference type="EC" id="2.7.4.25"/>
    </reaction>
</comment>
<comment type="subcellular location">
    <subcellularLocation>
        <location evidence="1">Cytoplasm</location>
    </subcellularLocation>
</comment>
<comment type="similarity">
    <text evidence="1">Belongs to the cytidylate kinase family. Type 1 subfamily.</text>
</comment>
<protein>
    <recommendedName>
        <fullName evidence="1">Cytidylate kinase</fullName>
        <shortName evidence="1">CK</shortName>
        <ecNumber evidence="1">2.7.4.25</ecNumber>
    </recommendedName>
    <alternativeName>
        <fullName evidence="1">Cytidine monophosphate kinase</fullName>
        <shortName evidence="1">CMP kinase</shortName>
    </alternativeName>
</protein>
<sequence length="216" mass="24098">MNKINIAIDGPAAAGKSTIAKRVAEALSMIYVDTGAMYRAITLAHLEQPETEIDKLVDHIDLKLVNRSGQRIYLNGSDVSDRIREHDVTLNVSRIASIESVRTKLVNLQQNMTANKGVVMDGRDIGTKVIPEAELKVYMVASVEERAERRLIDNRNRGIASTFEELKRDIERRDHLDMTREISPLTKAEDAIEIDTTGKSIEEVTAQIIELAKSAM</sequence>
<organism>
    <name type="scientific">Macrococcus caseolyticus (strain JCSC5402)</name>
    <name type="common">Macrococcoides caseolyticum</name>
    <dbReference type="NCBI Taxonomy" id="458233"/>
    <lineage>
        <taxon>Bacteria</taxon>
        <taxon>Bacillati</taxon>
        <taxon>Bacillota</taxon>
        <taxon>Bacilli</taxon>
        <taxon>Bacillales</taxon>
        <taxon>Staphylococcaceae</taxon>
        <taxon>Macrococcoides</taxon>
    </lineage>
</organism>
<gene>
    <name evidence="1" type="primary">cmk</name>
    <name type="ordered locus">MCCL_1128</name>
</gene>
<feature type="chain" id="PRO_1000125290" description="Cytidylate kinase">
    <location>
        <begin position="1"/>
        <end position="216"/>
    </location>
</feature>
<feature type="binding site" evidence="1">
    <location>
        <begin position="10"/>
        <end position="18"/>
    </location>
    <ligand>
        <name>ATP</name>
        <dbReference type="ChEBI" id="CHEBI:30616"/>
    </ligand>
</feature>